<feature type="signal peptide" evidence="2">
    <location>
        <begin position="1"/>
        <end position="26"/>
    </location>
</feature>
<feature type="chain" id="PRO_0000011002" description="Interferon alpha/beta receptor 1">
    <location>
        <begin position="27"/>
        <end position="590"/>
    </location>
</feature>
<feature type="topological domain" description="Extracellular" evidence="2">
    <location>
        <begin position="27"/>
        <end position="429"/>
    </location>
</feature>
<feature type="transmembrane region" description="Helical" evidence="2">
    <location>
        <begin position="430"/>
        <end position="449"/>
    </location>
</feature>
<feature type="topological domain" description="Cytoplasmic" evidence="2">
    <location>
        <begin position="450"/>
        <end position="590"/>
    </location>
</feature>
<feature type="domain" description="Fibronectin type-III 1" evidence="3">
    <location>
        <begin position="31"/>
        <end position="125"/>
    </location>
</feature>
<feature type="domain" description="Fibronectin type-III 2" evidence="3">
    <location>
        <begin position="127"/>
        <end position="226"/>
    </location>
</feature>
<feature type="domain" description="Fibronectin type-III 3" evidence="3">
    <location>
        <begin position="230"/>
        <end position="327"/>
    </location>
</feature>
<feature type="domain" description="Fibronectin type-III 4" evidence="3">
    <location>
        <begin position="332"/>
        <end position="425"/>
    </location>
</feature>
<feature type="region of interest" description="Important for interaction with TYK2" evidence="1">
    <location>
        <begin position="483"/>
        <end position="492"/>
    </location>
</feature>
<feature type="region of interest" description="Disordered" evidence="4">
    <location>
        <begin position="514"/>
        <end position="545"/>
    </location>
</feature>
<feature type="compositionally biased region" description="Polar residues" evidence="4">
    <location>
        <begin position="518"/>
        <end position="530"/>
    </location>
</feature>
<feature type="modified residue" description="Phosphoserine" evidence="5">
    <location>
        <position position="526"/>
    </location>
</feature>
<feature type="glycosylation site" description="N-linked (GlcNAc...) asparagine" evidence="2">
    <location>
        <position position="43"/>
    </location>
</feature>
<feature type="glycosylation site" description="N-linked (GlcNAc...) asparagine" evidence="2">
    <location>
        <position position="109"/>
    </location>
</feature>
<feature type="glycosylation site" description="N-linked (GlcNAc...) asparagine" evidence="2">
    <location>
        <position position="181"/>
    </location>
</feature>
<feature type="glycosylation site" description="N-linked (GlcNAc...) asparagine" evidence="2">
    <location>
        <position position="214"/>
    </location>
</feature>
<feature type="glycosylation site" description="N-linked (GlcNAc...) asparagine" evidence="2">
    <location>
        <position position="314"/>
    </location>
</feature>
<feature type="glycosylation site" description="N-linked (GlcNAc...) asparagine" evidence="2">
    <location>
        <position position="370"/>
    </location>
</feature>
<feature type="glycosylation site" description="N-linked (GlcNAc...) asparagine" evidence="2">
    <location>
        <position position="409"/>
    </location>
</feature>
<feature type="glycosylation site" description="N-linked (GlcNAc...) asparagine" evidence="2">
    <location>
        <position position="413"/>
    </location>
</feature>
<feature type="disulfide bond" evidence="1">
    <location>
        <begin position="78"/>
        <end position="86"/>
    </location>
</feature>
<feature type="disulfide bond" evidence="8">
    <location>
        <begin position="199"/>
        <end position="220"/>
    </location>
</feature>
<feature type="disulfide bond" evidence="8">
    <location>
        <begin position="284"/>
        <end position="292"/>
    </location>
</feature>
<feature type="disulfide bond" evidence="8">
    <location>
        <begin position="397"/>
        <end position="419"/>
    </location>
</feature>
<feature type="cross-link" description="Glycyl lysine isopeptide (Lys-Gly) (interchain with G-Cter in ubiquitin)" evidence="1">
    <location>
        <position position="517"/>
    </location>
</feature>
<feature type="mutagenesis site" description="Abolishes interaction with FBXW11. Prevents interalization from the cell membrane and lysosomal degradation." evidence="5">
    <original>S</original>
    <variation>A</variation>
    <location>
        <position position="526"/>
    </location>
</feature>
<feature type="sequence conflict" description="In Ref. 1; AAA37890." evidence="10" ref="1">
    <original>R</original>
    <variation>H</variation>
    <location>
        <position position="274"/>
    </location>
</feature>
<feature type="strand" evidence="13">
    <location>
        <begin position="38"/>
        <end position="40"/>
    </location>
</feature>
<feature type="strand" evidence="13">
    <location>
        <begin position="43"/>
        <end position="45"/>
    </location>
</feature>
<feature type="helix" evidence="13">
    <location>
        <begin position="122"/>
        <end position="125"/>
    </location>
</feature>
<feature type="strand" evidence="13">
    <location>
        <begin position="126"/>
        <end position="128"/>
    </location>
</feature>
<feature type="strand" evidence="13">
    <location>
        <begin position="132"/>
        <end position="137"/>
    </location>
</feature>
<feature type="strand" evidence="13">
    <location>
        <begin position="142"/>
        <end position="147"/>
    </location>
</feature>
<feature type="strand" evidence="13">
    <location>
        <begin position="149"/>
        <end position="152"/>
    </location>
</feature>
<feature type="strand" evidence="13">
    <location>
        <begin position="154"/>
        <end position="156"/>
    </location>
</feature>
<feature type="turn" evidence="13">
    <location>
        <begin position="157"/>
        <end position="162"/>
    </location>
</feature>
<feature type="strand" evidence="13">
    <location>
        <begin position="164"/>
        <end position="173"/>
    </location>
</feature>
<feature type="strand" evidence="13">
    <location>
        <begin position="178"/>
        <end position="189"/>
    </location>
</feature>
<feature type="strand" evidence="13">
    <location>
        <begin position="197"/>
        <end position="205"/>
    </location>
</feature>
<feature type="strand" evidence="13">
    <location>
        <begin position="207"/>
        <end position="210"/>
    </location>
</feature>
<feature type="strand" evidence="13">
    <location>
        <begin position="219"/>
        <end position="222"/>
    </location>
</feature>
<feature type="strand" evidence="13">
    <location>
        <begin position="236"/>
        <end position="239"/>
    </location>
</feature>
<feature type="strand" evidence="13">
    <location>
        <begin position="241"/>
        <end position="247"/>
    </location>
</feature>
<feature type="strand" evidence="13">
    <location>
        <begin position="261"/>
        <end position="264"/>
    </location>
</feature>
<feature type="helix" evidence="13">
    <location>
        <begin position="265"/>
        <end position="269"/>
    </location>
</feature>
<feature type="strand" evidence="13">
    <location>
        <begin position="282"/>
        <end position="290"/>
    </location>
</feature>
<feature type="strand" evidence="13">
    <location>
        <begin position="292"/>
        <end position="295"/>
    </location>
</feature>
<feature type="turn" evidence="13">
    <location>
        <begin position="296"/>
        <end position="298"/>
    </location>
</feature>
<feature type="strand" evidence="13">
    <location>
        <begin position="301"/>
        <end position="307"/>
    </location>
</feature>
<feature type="strand" evidence="13">
    <location>
        <begin position="323"/>
        <end position="326"/>
    </location>
</feature>
<feature type="strand" evidence="13">
    <location>
        <begin position="337"/>
        <end position="342"/>
    </location>
</feature>
<feature type="strand" evidence="13">
    <location>
        <begin position="347"/>
        <end position="352"/>
    </location>
</feature>
<feature type="strand" evidence="13">
    <location>
        <begin position="354"/>
        <end position="356"/>
    </location>
</feature>
<feature type="strand" evidence="13">
    <location>
        <begin position="362"/>
        <end position="369"/>
    </location>
</feature>
<feature type="strand" evidence="13">
    <location>
        <begin position="376"/>
        <end position="387"/>
    </location>
</feature>
<feature type="strand" evidence="13">
    <location>
        <begin position="395"/>
        <end position="403"/>
    </location>
</feature>
<feature type="strand" evidence="13">
    <location>
        <begin position="418"/>
        <end position="421"/>
    </location>
</feature>
<organism>
    <name type="scientific">Mus musculus</name>
    <name type="common">Mouse</name>
    <dbReference type="NCBI Taxonomy" id="10090"/>
    <lineage>
        <taxon>Eukaryota</taxon>
        <taxon>Metazoa</taxon>
        <taxon>Chordata</taxon>
        <taxon>Craniata</taxon>
        <taxon>Vertebrata</taxon>
        <taxon>Euteleostomi</taxon>
        <taxon>Mammalia</taxon>
        <taxon>Eutheria</taxon>
        <taxon>Euarchontoglires</taxon>
        <taxon>Glires</taxon>
        <taxon>Rodentia</taxon>
        <taxon>Myomorpha</taxon>
        <taxon>Muroidea</taxon>
        <taxon>Muridae</taxon>
        <taxon>Murinae</taxon>
        <taxon>Mus</taxon>
        <taxon>Mus</taxon>
    </lineage>
</organism>
<name>INAR1_MOUSE</name>
<accession>P33896</accession>
<accession>Q80UJ3</accession>
<proteinExistence type="evidence at protein level"/>
<comment type="function">
    <text evidence="1 5 6 8 9">Together with IFNAR2, forms the heterodimeric receptor for type I interferons (including interferons alpha, beta, epsilon, omega and kappa) (PubMed:14532120, PubMed:1533935, PubMed:24075985). Type I interferon binding activates the JAK-STAT signaling cascade, and triggers tyrosine phosphorylation of a number of proteins including JAKs, TYK2, STAT proteins and the IFNR alpha- and beta-subunits themselves (By similarity). STAT proteins are then phosphorylated by the JAKs, promoting their translocation into the nucleus to regulate expression of interferon-regulated genes (By similarity). Can also act independently of IFNAR2: form an active IFNB1 receptor by itself and activate a signaling cascade that does not involve activation of the JAK-STAT pathway (PubMed:23872679).</text>
</comment>
<comment type="subunit">
    <text evidence="1 5">Heterodimer with IFNAR2; forming the receptor for type I interferon (By similarity). Interacts with TYK2 (By similarity). Interacts with STAT1 and STAT2 (By similarity). Interacts (serine-phosphorylated form) with FBXW11, the substrate recognition component of a SCF (SKP1-CUL1-F-box protein) E3 ubiquitin-protein ligase complex (PubMed:14532120). 3Interacts with SHMT2; this promotes interaction with ABRAXAS2 and the BRISC complex (By similarity). Interacts with TRIM10; this interaction prevents association between IFNAR1 and TYK2 (By similarity).</text>
</comment>
<comment type="subcellular location">
    <subcellularLocation>
        <location evidence="5 6 9">Cell membrane</location>
        <topology evidence="10">Single-pass type I membrane protein</topology>
    </subcellularLocation>
    <subcellularLocation>
        <location evidence="11">Late endosome</location>
    </subcellularLocation>
    <subcellularLocation>
        <location evidence="11">Lysosome</location>
    </subcellularLocation>
    <text evidence="11 12">Interferon binding triggers internalization of the receptor from the cell membrane into endosomes and then into lysosomes.</text>
</comment>
<comment type="PTM">
    <text evidence="1 5">Ubiquitinated (PubMed:14532120). This leads to its internalization and lysosomal degradation. The 'Lys-63'-linked ubiquitin chains are cleaved off by the BRISC complex; this prevents receptor internalization and degradation. Probable ubiquitination sites have been identified in human, but are poorly conserved across species.</text>
</comment>
<comment type="PTM">
    <text evidence="5">Phosphorylated on serine residues in response to interferon binding; this promotes interaction with FBXW11 and ubiquitination (PubMed:14532120).</text>
</comment>
<comment type="disruption phenotype">
    <text evidence="7 8">Mice are protected from the lethal septic effects of intraperitoneal LPS administration observed in wild-type mice (PubMed:23872679). Double knockout with TREX1 does not show a visible phenotype (PubMed:18724932).</text>
</comment>
<comment type="miscellaneous">
    <text evidence="10">The interferon signaling pathway is not identical between species. Thus, the interaction with STAT1 and STAT2 may not be conserved in mouse; in human it requires phosphorylation at 'Tyr-466', but the mouse protein has a Phe at the equivalent position. Likewise, cysteine palmitoylation is required for the activation of STAT1 and STAT2 in human, but the Cys is not conserved in mouse.</text>
</comment>
<comment type="similarity">
    <text evidence="10">Belongs to the type II cytokine receptor family.</text>
</comment>
<keyword id="KW-0002">3D-structure</keyword>
<keyword id="KW-1003">Cell membrane</keyword>
<keyword id="KW-1015">Disulfide bond</keyword>
<keyword id="KW-0967">Endosome</keyword>
<keyword id="KW-0325">Glycoprotein</keyword>
<keyword id="KW-1017">Isopeptide bond</keyword>
<keyword id="KW-0458">Lysosome</keyword>
<keyword id="KW-0472">Membrane</keyword>
<keyword id="KW-0597">Phosphoprotein</keyword>
<keyword id="KW-0675">Receptor</keyword>
<keyword id="KW-1185">Reference proteome</keyword>
<keyword id="KW-0677">Repeat</keyword>
<keyword id="KW-0732">Signal</keyword>
<keyword id="KW-0812">Transmembrane</keyword>
<keyword id="KW-1133">Transmembrane helix</keyword>
<keyword id="KW-0832">Ubl conjugation</keyword>
<protein>
    <recommendedName>
        <fullName>Interferon alpha/beta receptor 1</fullName>
        <shortName>IFN-R-1</shortName>
        <shortName>IFN-alpha/beta receptor 1</shortName>
    </recommendedName>
    <alternativeName>
        <fullName>Type I interferon receptor 1</fullName>
    </alternativeName>
</protein>
<evidence type="ECO:0000250" key="1">
    <source>
        <dbReference type="UniProtKB" id="P17181"/>
    </source>
</evidence>
<evidence type="ECO:0000255" key="2"/>
<evidence type="ECO:0000255" key="3">
    <source>
        <dbReference type="PROSITE-ProRule" id="PRU00316"/>
    </source>
</evidence>
<evidence type="ECO:0000256" key="4">
    <source>
        <dbReference type="SAM" id="MobiDB-lite"/>
    </source>
</evidence>
<evidence type="ECO:0000269" key="5">
    <source>
    </source>
</evidence>
<evidence type="ECO:0000269" key="6">
    <source>
    </source>
</evidence>
<evidence type="ECO:0000269" key="7">
    <source>
    </source>
</evidence>
<evidence type="ECO:0000269" key="8">
    <source>
    </source>
</evidence>
<evidence type="ECO:0000269" key="9">
    <source>
    </source>
</evidence>
<evidence type="ECO:0000305" key="10"/>
<evidence type="ECO:0000305" key="11">
    <source>
    </source>
</evidence>
<evidence type="ECO:0000305" key="12">
    <source>
    </source>
</evidence>
<evidence type="ECO:0007829" key="13">
    <source>
        <dbReference type="PDB" id="3WCY"/>
    </source>
</evidence>
<reference key="1">
    <citation type="journal article" date="1992" name="Proc. Natl. Acad. Sci. U.S.A.">
        <title>Behavior of a cloned murine interferon alpha/beta receptor expressed in homospecific or heterospecific background.</title>
        <authorList>
            <person name="Uze G."/>
            <person name="Lutfalla G."/>
            <person name="Bandu M.T."/>
            <person name="Proudhon D."/>
            <person name="Mogensen K.E."/>
        </authorList>
    </citation>
    <scope>NUCLEOTIDE SEQUENCE [MRNA]</scope>
    <scope>FUNCTION</scope>
    <scope>SUBCELLULAR LOCATION</scope>
</reference>
<reference key="2">
    <citation type="journal article" date="1994" name="Gene">
        <title>Structure of the murine interferon alpha/beta receptor-encoding gene: high-frequency rearrangements in the interferon-resistant L1210 cell line.</title>
        <authorList>
            <person name="Lutfalla G."/>
            <person name="Uze G."/>
        </authorList>
    </citation>
    <scope>NUCLEOTIDE SEQUENCE [MRNA]</scope>
</reference>
<reference key="3">
    <citation type="journal article" date="2005" name="Science">
        <title>The transcriptional landscape of the mammalian genome.</title>
        <authorList>
            <person name="Carninci P."/>
            <person name="Kasukawa T."/>
            <person name="Katayama S."/>
            <person name="Gough J."/>
            <person name="Frith M.C."/>
            <person name="Maeda N."/>
            <person name="Oyama R."/>
            <person name="Ravasi T."/>
            <person name="Lenhard B."/>
            <person name="Wells C."/>
            <person name="Kodzius R."/>
            <person name="Shimokawa K."/>
            <person name="Bajic V.B."/>
            <person name="Brenner S.E."/>
            <person name="Batalov S."/>
            <person name="Forrest A.R."/>
            <person name="Zavolan M."/>
            <person name="Davis M.J."/>
            <person name="Wilming L.G."/>
            <person name="Aidinis V."/>
            <person name="Allen J.E."/>
            <person name="Ambesi-Impiombato A."/>
            <person name="Apweiler R."/>
            <person name="Aturaliya R.N."/>
            <person name="Bailey T.L."/>
            <person name="Bansal M."/>
            <person name="Baxter L."/>
            <person name="Beisel K.W."/>
            <person name="Bersano T."/>
            <person name="Bono H."/>
            <person name="Chalk A.M."/>
            <person name="Chiu K.P."/>
            <person name="Choudhary V."/>
            <person name="Christoffels A."/>
            <person name="Clutterbuck D.R."/>
            <person name="Crowe M.L."/>
            <person name="Dalla E."/>
            <person name="Dalrymple B.P."/>
            <person name="de Bono B."/>
            <person name="Della Gatta G."/>
            <person name="di Bernardo D."/>
            <person name="Down T."/>
            <person name="Engstrom P."/>
            <person name="Fagiolini M."/>
            <person name="Faulkner G."/>
            <person name="Fletcher C.F."/>
            <person name="Fukushima T."/>
            <person name="Furuno M."/>
            <person name="Futaki S."/>
            <person name="Gariboldi M."/>
            <person name="Georgii-Hemming P."/>
            <person name="Gingeras T.R."/>
            <person name="Gojobori T."/>
            <person name="Green R.E."/>
            <person name="Gustincich S."/>
            <person name="Harbers M."/>
            <person name="Hayashi Y."/>
            <person name="Hensch T.K."/>
            <person name="Hirokawa N."/>
            <person name="Hill D."/>
            <person name="Huminiecki L."/>
            <person name="Iacono M."/>
            <person name="Ikeo K."/>
            <person name="Iwama A."/>
            <person name="Ishikawa T."/>
            <person name="Jakt M."/>
            <person name="Kanapin A."/>
            <person name="Katoh M."/>
            <person name="Kawasawa Y."/>
            <person name="Kelso J."/>
            <person name="Kitamura H."/>
            <person name="Kitano H."/>
            <person name="Kollias G."/>
            <person name="Krishnan S.P."/>
            <person name="Kruger A."/>
            <person name="Kummerfeld S.K."/>
            <person name="Kurochkin I.V."/>
            <person name="Lareau L.F."/>
            <person name="Lazarevic D."/>
            <person name="Lipovich L."/>
            <person name="Liu J."/>
            <person name="Liuni S."/>
            <person name="McWilliam S."/>
            <person name="Madan Babu M."/>
            <person name="Madera M."/>
            <person name="Marchionni L."/>
            <person name="Matsuda H."/>
            <person name="Matsuzawa S."/>
            <person name="Miki H."/>
            <person name="Mignone F."/>
            <person name="Miyake S."/>
            <person name="Morris K."/>
            <person name="Mottagui-Tabar S."/>
            <person name="Mulder N."/>
            <person name="Nakano N."/>
            <person name="Nakauchi H."/>
            <person name="Ng P."/>
            <person name="Nilsson R."/>
            <person name="Nishiguchi S."/>
            <person name="Nishikawa S."/>
            <person name="Nori F."/>
            <person name="Ohara O."/>
            <person name="Okazaki Y."/>
            <person name="Orlando V."/>
            <person name="Pang K.C."/>
            <person name="Pavan W.J."/>
            <person name="Pavesi G."/>
            <person name="Pesole G."/>
            <person name="Petrovsky N."/>
            <person name="Piazza S."/>
            <person name="Reed J."/>
            <person name="Reid J.F."/>
            <person name="Ring B.Z."/>
            <person name="Ringwald M."/>
            <person name="Rost B."/>
            <person name="Ruan Y."/>
            <person name="Salzberg S.L."/>
            <person name="Sandelin A."/>
            <person name="Schneider C."/>
            <person name="Schoenbach C."/>
            <person name="Sekiguchi K."/>
            <person name="Semple C.A."/>
            <person name="Seno S."/>
            <person name="Sessa L."/>
            <person name="Sheng Y."/>
            <person name="Shibata Y."/>
            <person name="Shimada H."/>
            <person name="Shimada K."/>
            <person name="Silva D."/>
            <person name="Sinclair B."/>
            <person name="Sperling S."/>
            <person name="Stupka E."/>
            <person name="Sugiura K."/>
            <person name="Sultana R."/>
            <person name="Takenaka Y."/>
            <person name="Taki K."/>
            <person name="Tammoja K."/>
            <person name="Tan S.L."/>
            <person name="Tang S."/>
            <person name="Taylor M.S."/>
            <person name="Tegner J."/>
            <person name="Teichmann S.A."/>
            <person name="Ueda H.R."/>
            <person name="van Nimwegen E."/>
            <person name="Verardo R."/>
            <person name="Wei C.L."/>
            <person name="Yagi K."/>
            <person name="Yamanishi H."/>
            <person name="Zabarovsky E."/>
            <person name="Zhu S."/>
            <person name="Zimmer A."/>
            <person name="Hide W."/>
            <person name="Bult C."/>
            <person name="Grimmond S.M."/>
            <person name="Teasdale R.D."/>
            <person name="Liu E.T."/>
            <person name="Brusic V."/>
            <person name="Quackenbush J."/>
            <person name="Wahlestedt C."/>
            <person name="Mattick J.S."/>
            <person name="Hume D.A."/>
            <person name="Kai C."/>
            <person name="Sasaki D."/>
            <person name="Tomaru Y."/>
            <person name="Fukuda S."/>
            <person name="Kanamori-Katayama M."/>
            <person name="Suzuki M."/>
            <person name="Aoki J."/>
            <person name="Arakawa T."/>
            <person name="Iida J."/>
            <person name="Imamura K."/>
            <person name="Itoh M."/>
            <person name="Kato T."/>
            <person name="Kawaji H."/>
            <person name="Kawagashira N."/>
            <person name="Kawashima T."/>
            <person name="Kojima M."/>
            <person name="Kondo S."/>
            <person name="Konno H."/>
            <person name="Nakano K."/>
            <person name="Ninomiya N."/>
            <person name="Nishio T."/>
            <person name="Okada M."/>
            <person name="Plessy C."/>
            <person name="Shibata K."/>
            <person name="Shiraki T."/>
            <person name="Suzuki S."/>
            <person name="Tagami M."/>
            <person name="Waki K."/>
            <person name="Watahiki A."/>
            <person name="Okamura-Oho Y."/>
            <person name="Suzuki H."/>
            <person name="Kawai J."/>
            <person name="Hayashizaki Y."/>
        </authorList>
    </citation>
    <scope>NUCLEOTIDE SEQUENCE [LARGE SCALE MRNA]</scope>
    <source>
        <strain>C57BL/6J</strain>
        <tissue>Hippocampus</tissue>
        <tissue>Skin</tissue>
    </source>
</reference>
<reference key="4">
    <citation type="submission" date="2005-09" db="EMBL/GenBank/DDBJ databases">
        <authorList>
            <person name="Mural R.J."/>
            <person name="Adams M.D."/>
            <person name="Myers E.W."/>
            <person name="Smith H.O."/>
            <person name="Venter J.C."/>
        </authorList>
    </citation>
    <scope>NUCLEOTIDE SEQUENCE [LARGE SCALE GENOMIC DNA]</scope>
</reference>
<reference key="5">
    <citation type="journal article" date="2004" name="Genome Res.">
        <title>The status, quality, and expansion of the NIH full-length cDNA project: the Mammalian Gene Collection (MGC).</title>
        <authorList>
            <consortium name="The MGC Project Team"/>
        </authorList>
    </citation>
    <scope>NUCLEOTIDE SEQUENCE [LARGE SCALE MRNA]</scope>
    <source>
        <strain>C57BL/6J</strain>
        <tissue>Brain</tissue>
        <tissue>Eye</tissue>
    </source>
</reference>
<reference key="6">
    <citation type="journal article" date="2003" name="EMBO J.">
        <title>SCF(HOS) ubiquitin ligase mediates the ligand-induced down-regulation of the interferon-alpha receptor.</title>
        <authorList>
            <person name="Kumar K.G."/>
            <person name="Tang W."/>
            <person name="Ravindranath A.K."/>
            <person name="Clark W.A."/>
            <person name="Croze E."/>
            <person name="Fuchs S.Y."/>
        </authorList>
    </citation>
    <scope>FUNCTION</scope>
    <scope>INTERACTION WITH FBXW11</scope>
    <scope>UBIQUITINATION</scope>
    <scope>PHOSPHORYLATION AT SER-526</scope>
    <scope>MUTAGENESIS OF SER-526</scope>
    <scope>SUBCELLULAR LOCATION</scope>
</reference>
<reference key="7">
    <citation type="journal article" date="2008" name="Cell">
        <title>Trex1 prevents cell-intrinsic initiation of autoimmunity.</title>
        <authorList>
            <person name="Stetson D.B."/>
            <person name="Ko J.S."/>
            <person name="Heidmann T."/>
            <person name="Medzhitov R."/>
        </authorList>
    </citation>
    <scope>DISRUPTION PHENOTYPE</scope>
</reference>
<reference key="8">
    <citation type="journal article" date="2013" name="Cell Rep.">
        <title>A BRISC-SHMT complex deubiquitinates IFNAR1 and regulates interferon responses.</title>
        <authorList>
            <person name="Zheng H."/>
            <person name="Gupta V."/>
            <person name="Patterson-Fortin J."/>
            <person name="Bhattacharya S."/>
            <person name="Katlinski K."/>
            <person name="Wu J."/>
            <person name="Varghese B."/>
            <person name="Carbone C.J."/>
            <person name="Aressy B."/>
            <person name="Fuchs S.Y."/>
            <person name="Greenberg R.A."/>
        </authorList>
    </citation>
    <scope>FUNCTION</scope>
    <scope>SUBCELLULAR LOCATION</scope>
</reference>
<reference key="9">
    <citation type="journal article" date="2013" name="Nat. Immunol.">
        <title>Structural basis of a unique interferon-beta signaling axis mediated via the receptor IFNAR1.</title>
        <authorList>
            <person name="de Weerd N.A."/>
            <person name="Vivian J.P."/>
            <person name="Nguyen T.K."/>
            <person name="Mangan N.E."/>
            <person name="Gould J.A."/>
            <person name="Braniff S.J."/>
            <person name="Zaker-Tabrizi L."/>
            <person name="Fung K.Y."/>
            <person name="Forster S.C."/>
            <person name="Beddoe T."/>
            <person name="Reid H.H."/>
            <person name="Rossjohn J."/>
            <person name="Hertzog P.J."/>
        </authorList>
    </citation>
    <scope>X-RAY CRYSTALLOGRAPHY (2.9 ANGSTROMS) OF 27-429 IN COMPLEX WITH IFNB1</scope>
    <scope>DISULFIDE BONDS</scope>
    <scope>FUNCTION</scope>
    <scope>DISRUPTION PHENOTYPE</scope>
</reference>
<dbReference type="EMBL" id="M89641">
    <property type="protein sequence ID" value="AAA37890.1"/>
    <property type="molecule type" value="mRNA"/>
</dbReference>
<dbReference type="EMBL" id="AK132431">
    <property type="protein sequence ID" value="BAE21165.1"/>
    <property type="molecule type" value="mRNA"/>
</dbReference>
<dbReference type="EMBL" id="AK141630">
    <property type="protein sequence ID" value="BAE24775.1"/>
    <property type="molecule type" value="mRNA"/>
</dbReference>
<dbReference type="EMBL" id="CH466602">
    <property type="protein sequence ID" value="EDL03825.1"/>
    <property type="molecule type" value="Genomic_DNA"/>
</dbReference>
<dbReference type="EMBL" id="BC043935">
    <property type="protein sequence ID" value="AAH43935.1"/>
    <property type="molecule type" value="mRNA"/>
</dbReference>
<dbReference type="EMBL" id="BC052429">
    <property type="protein sequence ID" value="AAH52429.1"/>
    <property type="molecule type" value="mRNA"/>
</dbReference>
<dbReference type="CCDS" id="CCDS28326.1"/>
<dbReference type="PIR" id="A45283">
    <property type="entry name" value="A45283"/>
</dbReference>
<dbReference type="RefSeq" id="NP_034638.2">
    <property type="nucleotide sequence ID" value="NM_010508.2"/>
</dbReference>
<dbReference type="PDB" id="3WCY">
    <property type="method" value="X-ray"/>
    <property type="resolution" value="2.90 A"/>
    <property type="chains" value="A=27-429"/>
</dbReference>
<dbReference type="PDBsum" id="3WCY"/>
<dbReference type="SMR" id="P33896"/>
<dbReference type="FunCoup" id="P33896">
    <property type="interactions" value="1854"/>
</dbReference>
<dbReference type="IntAct" id="P33896">
    <property type="interactions" value="4"/>
</dbReference>
<dbReference type="STRING" id="10090.ENSMUSP00000023689"/>
<dbReference type="GlyCosmos" id="P33896">
    <property type="glycosylation" value="8 sites, No reported glycans"/>
</dbReference>
<dbReference type="GlyGen" id="P33896">
    <property type="glycosylation" value="9 sites, 2 N-linked glycans (2 sites)"/>
</dbReference>
<dbReference type="iPTMnet" id="P33896"/>
<dbReference type="PhosphoSitePlus" id="P33896"/>
<dbReference type="PaxDb" id="10090-ENSMUSP00000023689"/>
<dbReference type="ProteomicsDB" id="269404"/>
<dbReference type="Antibodypedia" id="3016">
    <property type="antibodies" value="879 antibodies from 47 providers"/>
</dbReference>
<dbReference type="DNASU" id="15975"/>
<dbReference type="Ensembl" id="ENSMUST00000023689.11">
    <property type="protein sequence ID" value="ENSMUSP00000023689.5"/>
    <property type="gene ID" value="ENSMUSG00000022967.14"/>
</dbReference>
<dbReference type="Ensembl" id="ENSMUST00000117748.8">
    <property type="protein sequence ID" value="ENSMUSP00000112670.2"/>
    <property type="gene ID" value="ENSMUSG00000022967.14"/>
</dbReference>
<dbReference type="GeneID" id="15975"/>
<dbReference type="KEGG" id="mmu:15975"/>
<dbReference type="UCSC" id="uc007zxn.2">
    <property type="organism name" value="mouse"/>
</dbReference>
<dbReference type="AGR" id="MGI:107658"/>
<dbReference type="CTD" id="3454"/>
<dbReference type="MGI" id="MGI:107658">
    <property type="gene designation" value="Ifnar1"/>
</dbReference>
<dbReference type="VEuPathDB" id="HostDB:ENSMUSG00000022967"/>
<dbReference type="eggNOG" id="ENOG502RISU">
    <property type="taxonomic scope" value="Eukaryota"/>
</dbReference>
<dbReference type="GeneTree" id="ENSGT00940000158406"/>
<dbReference type="HOGENOM" id="CLU_035134_0_0_1"/>
<dbReference type="InParanoid" id="P33896"/>
<dbReference type="OMA" id="YCINTTV"/>
<dbReference type="OrthoDB" id="9944680at2759"/>
<dbReference type="PhylomeDB" id="P33896"/>
<dbReference type="Reactome" id="R-MMU-909733">
    <property type="pathway name" value="Interferon alpha/beta signaling"/>
</dbReference>
<dbReference type="Reactome" id="R-MMU-912694">
    <property type="pathway name" value="Regulation of IFNA/IFNB signaling"/>
</dbReference>
<dbReference type="BioGRID-ORCS" id="15975">
    <property type="hits" value="10 hits in 80 CRISPR screens"/>
</dbReference>
<dbReference type="ChiTaRS" id="Ifnar1">
    <property type="organism name" value="mouse"/>
</dbReference>
<dbReference type="EvolutionaryTrace" id="P33896"/>
<dbReference type="PRO" id="PR:P33896"/>
<dbReference type="Proteomes" id="UP000000589">
    <property type="component" value="Chromosome 16"/>
</dbReference>
<dbReference type="RNAct" id="P33896">
    <property type="molecule type" value="protein"/>
</dbReference>
<dbReference type="Bgee" id="ENSMUSG00000022967">
    <property type="expression patterns" value="Expressed in undifferentiated genital tubercle and 273 other cell types or tissues"/>
</dbReference>
<dbReference type="ExpressionAtlas" id="P33896">
    <property type="expression patterns" value="baseline and differential"/>
</dbReference>
<dbReference type="GO" id="GO:0005770">
    <property type="term" value="C:late endosome"/>
    <property type="evidence" value="ECO:0007669"/>
    <property type="project" value="UniProtKB-SubCell"/>
</dbReference>
<dbReference type="GO" id="GO:0005764">
    <property type="term" value="C:lysosome"/>
    <property type="evidence" value="ECO:0007669"/>
    <property type="project" value="UniProtKB-SubCell"/>
</dbReference>
<dbReference type="GO" id="GO:0005886">
    <property type="term" value="C:plasma membrane"/>
    <property type="evidence" value="ECO:0000314"/>
    <property type="project" value="UniProtKB"/>
</dbReference>
<dbReference type="GO" id="GO:0004904">
    <property type="term" value="F:interferon receptor activity"/>
    <property type="evidence" value="ECO:0000315"/>
    <property type="project" value="UniProtKB"/>
</dbReference>
<dbReference type="GO" id="GO:0019962">
    <property type="term" value="F:type I interferon binding"/>
    <property type="evidence" value="ECO:0000353"/>
    <property type="project" value="UniProtKB"/>
</dbReference>
<dbReference type="GO" id="GO:0004905">
    <property type="term" value="F:type I interferon receptor activity"/>
    <property type="evidence" value="ECO:0000314"/>
    <property type="project" value="UniProtKB"/>
</dbReference>
<dbReference type="GO" id="GO:0035457">
    <property type="term" value="P:cellular response to interferon-alpha"/>
    <property type="evidence" value="ECO:0000315"/>
    <property type="project" value="UniProtKB"/>
</dbReference>
<dbReference type="GO" id="GO:0051607">
    <property type="term" value="P:defense response to virus"/>
    <property type="evidence" value="ECO:0000315"/>
    <property type="project" value="UniProtKB"/>
</dbReference>
<dbReference type="GO" id="GO:0010467">
    <property type="term" value="P:gene expression"/>
    <property type="evidence" value="ECO:0000315"/>
    <property type="project" value="MGI"/>
</dbReference>
<dbReference type="GO" id="GO:0045893">
    <property type="term" value="P:positive regulation of DNA-templated transcription"/>
    <property type="evidence" value="ECO:0000315"/>
    <property type="project" value="CACAO"/>
</dbReference>
<dbReference type="GO" id="GO:0032728">
    <property type="term" value="P:positive regulation of interferon-beta production"/>
    <property type="evidence" value="ECO:0000315"/>
    <property type="project" value="CACAO"/>
</dbReference>
<dbReference type="GO" id="GO:0032731">
    <property type="term" value="P:positive regulation of interleukin-1 beta production"/>
    <property type="evidence" value="ECO:0000315"/>
    <property type="project" value="MGI"/>
</dbReference>
<dbReference type="GO" id="GO:0032729">
    <property type="term" value="P:positive regulation of type II interferon production"/>
    <property type="evidence" value="ECO:0000316"/>
    <property type="project" value="MGI"/>
</dbReference>
<dbReference type="GO" id="GO:0032496">
    <property type="term" value="P:response to lipopolysaccharide"/>
    <property type="evidence" value="ECO:0000315"/>
    <property type="project" value="UniProtKB"/>
</dbReference>
<dbReference type="GO" id="GO:0042110">
    <property type="term" value="P:T cell activation"/>
    <property type="evidence" value="ECO:0000316"/>
    <property type="project" value="MGI"/>
</dbReference>
<dbReference type="GO" id="GO:0060337">
    <property type="term" value="P:type I interferon-mediated signaling pathway"/>
    <property type="evidence" value="ECO:0000314"/>
    <property type="project" value="UniProtKB"/>
</dbReference>
<dbReference type="CDD" id="cd00063">
    <property type="entry name" value="FN3"/>
    <property type="match status" value="1"/>
</dbReference>
<dbReference type="FunFam" id="2.60.40.10:FF:000842">
    <property type="entry name" value="Interferon receptor 1 isoform 4"/>
    <property type="match status" value="2"/>
</dbReference>
<dbReference type="FunFam" id="2.60.40.10:FF:001548">
    <property type="entry name" value="Interferon receptor 1 isoform 4"/>
    <property type="match status" value="1"/>
</dbReference>
<dbReference type="Gene3D" id="2.60.40.10">
    <property type="entry name" value="Immunoglobulins"/>
    <property type="match status" value="4"/>
</dbReference>
<dbReference type="InterPro" id="IPR003961">
    <property type="entry name" value="FN3_dom"/>
</dbReference>
<dbReference type="InterPro" id="IPR036116">
    <property type="entry name" value="FN3_sf"/>
</dbReference>
<dbReference type="InterPro" id="IPR013783">
    <property type="entry name" value="Ig-like_fold"/>
</dbReference>
<dbReference type="InterPro" id="IPR015373">
    <property type="entry name" value="Interferon/interleukin_rcp_dom"/>
</dbReference>
<dbReference type="InterPro" id="IPR016669">
    <property type="entry name" value="Interferon_alpha/beta_rcpt-1"/>
</dbReference>
<dbReference type="InterPro" id="IPR050650">
    <property type="entry name" value="Type-II_Cytokine-TF_Rcpt"/>
</dbReference>
<dbReference type="PANTHER" id="PTHR20859:SF54">
    <property type="entry name" value="INTERFERON ALPHA_BETA RECEPTOR 1"/>
    <property type="match status" value="1"/>
</dbReference>
<dbReference type="PANTHER" id="PTHR20859">
    <property type="entry name" value="INTERFERON/INTERLEUKIN RECEPTOR"/>
    <property type="match status" value="1"/>
</dbReference>
<dbReference type="Pfam" id="PF09294">
    <property type="entry name" value="Interfer-bind"/>
    <property type="match status" value="2"/>
</dbReference>
<dbReference type="Pfam" id="PF01108">
    <property type="entry name" value="Tissue_fac"/>
    <property type="match status" value="1"/>
</dbReference>
<dbReference type="PIRSF" id="PIRSF016567">
    <property type="entry name" value="IFN_alpha/beta_recept-1"/>
    <property type="match status" value="1"/>
</dbReference>
<dbReference type="SMART" id="SM00060">
    <property type="entry name" value="FN3"/>
    <property type="match status" value="3"/>
</dbReference>
<dbReference type="SUPFAM" id="SSF49265">
    <property type="entry name" value="Fibronectin type III"/>
    <property type="match status" value="4"/>
</dbReference>
<dbReference type="PROSITE" id="PS50853">
    <property type="entry name" value="FN3"/>
    <property type="match status" value="3"/>
</dbReference>
<sequence>MLAVVGAAALVLVAGAPWVLPSAAGGENLKPPENIDVYIIDDNYTLKWSSHGESMGSVTFSAEYRTKDEAKWLKVPECQHTTTTKCEFSLLDTNVYIKTQFRVRAEEGNSTSSWNEVDPFIPFYTAHMSPPEVRLEAEDKAILVHISPPGQDGNMWALEKPSFSYTIRIWQKSSSDKKTINSTYYVEKIPELLPETTYCLEVKAIHPSLKKHSNYSTVQCISTTVANKMPVPGNLQVDAQGKSYVLKWDYIASADVLFRAQWLPGYSKSSSGSRSDKWKPIPTCANVQTTHCVFSQDTVYTGTFFLHVQASEGNHTSFWSEEKFIDSQKHILPPPPVITVTAMSDTLLVYVNCQDSTCDGLNYEIIFWENTSNTKISMEKDGPEFTLKNLQPLTVYCVQARVLFRALLNKTSNFSEKLCEKTRPGSFSTIWIITGLGVVFFSVMVLYALRSVWKYLCHVCFPPLKPPRSIDEFFSEPPSKNLVLLTAEEHTERCFIIENTDTVAVEVKHAPEEDLRKYSSQTSQDSGNYSNEEEESVGTESGQAVLSKAPCGGPCSVPSPPGTLEDGTCFLGNEKYLQSPALRTEPALLC</sequence>
<gene>
    <name type="primary">Ifnar1</name>
    <name type="synonym">Ifar</name>
    <name type="synonym">Ifnar</name>
</gene>